<evidence type="ECO:0000269" key="1">
    <source>
    </source>
</evidence>
<evidence type="ECO:0000269" key="2">
    <source>
    </source>
</evidence>
<evidence type="ECO:0000269" key="3">
    <source>
    </source>
</evidence>
<evidence type="ECO:0000269" key="4">
    <source>
    </source>
</evidence>
<evidence type="ECO:0000269" key="5">
    <source>
    </source>
</evidence>
<evidence type="ECO:0000269" key="6">
    <source>
    </source>
</evidence>
<evidence type="ECO:0000269" key="7">
    <source>
    </source>
</evidence>
<evidence type="ECO:0000269" key="8">
    <source>
    </source>
</evidence>
<evidence type="ECO:0000269" key="9">
    <source>
    </source>
</evidence>
<evidence type="ECO:0000269" key="10">
    <source>
    </source>
</evidence>
<evidence type="ECO:0000269" key="11">
    <source>
    </source>
</evidence>
<evidence type="ECO:0000269" key="12">
    <source ref="3"/>
</evidence>
<evidence type="ECO:0000269" key="13">
    <source ref="4"/>
</evidence>
<evidence type="ECO:0000269" key="14">
    <source ref="7"/>
</evidence>
<evidence type="ECO:0000305" key="15"/>
<evidence type="ECO:0007744" key="16">
    <source>
    </source>
</evidence>
<evidence type="ECO:0007829" key="17">
    <source>
        <dbReference type="PDB" id="1SG0"/>
    </source>
</evidence>
<evidence type="ECO:0007829" key="18">
    <source>
        <dbReference type="PDB" id="3NHF"/>
    </source>
</evidence>
<evidence type="ECO:0007829" key="19">
    <source>
        <dbReference type="PDB" id="3O2N"/>
    </source>
</evidence>
<evidence type="ECO:0007829" key="20">
    <source>
        <dbReference type="PDB" id="4FGL"/>
    </source>
</evidence>
<sequence length="231" mass="25919">MAGKKVLIVYAHQEPKSFNGSLKNVAVDELSRQGCTVTVSDLYAMNLEPRATDKDITGTLSNPEVFNYGVETHEAYKQRSLASDITDEQKKVREADLVIFQFPLYWFSVPAILKGWMDRVLCQGFAFDIPGFYDSGLLQGKLALLSVTTGGTAEMYTKTGVNGDSRYFLWPLQHGTLHFCGFKVLAPQISFAPEIASEEERKGMVAAWSQRLQTIWKEEPIPCTAHWHFGQ</sequence>
<feature type="chain" id="PRO_0000071626" description="Ribosyldihydronicotinamide dehydrogenase [quinone]">
    <location>
        <begin position="1"/>
        <end position="231"/>
    </location>
</feature>
<feature type="binding site" evidence="7 9">
    <location>
        <position position="12"/>
    </location>
    <ligand>
        <name>FAD</name>
        <dbReference type="ChEBI" id="CHEBI:57692"/>
    </ligand>
</feature>
<feature type="binding site" evidence="7 9">
    <location>
        <begin position="18"/>
        <end position="21"/>
    </location>
    <ligand>
        <name>FAD</name>
        <dbReference type="ChEBI" id="CHEBI:57692"/>
    </ligand>
</feature>
<feature type="binding site" evidence="7 9">
    <location>
        <begin position="104"/>
        <end position="107"/>
    </location>
    <ligand>
        <name>FAD</name>
        <dbReference type="ChEBI" id="CHEBI:57692"/>
    </ligand>
</feature>
<feature type="binding site">
    <location>
        <begin position="127"/>
        <end position="129"/>
    </location>
    <ligand>
        <name>substrate</name>
    </ligand>
</feature>
<feature type="binding site" evidence="7 9">
    <location>
        <begin position="148"/>
        <end position="151"/>
    </location>
    <ligand>
        <name>FAD</name>
        <dbReference type="ChEBI" id="CHEBI:57692"/>
    </ligand>
</feature>
<feature type="binding site" evidence="7 9">
    <location>
        <position position="156"/>
    </location>
    <ligand>
        <name>FAD</name>
        <dbReference type="ChEBI" id="CHEBI:57692"/>
    </ligand>
</feature>
<feature type="binding site">
    <location>
        <position position="174"/>
    </location>
    <ligand>
        <name>Zn(2+)</name>
        <dbReference type="ChEBI" id="CHEBI:29105"/>
    </ligand>
</feature>
<feature type="binding site">
    <location>
        <position position="178"/>
    </location>
    <ligand>
        <name>Zn(2+)</name>
        <dbReference type="ChEBI" id="CHEBI:29105"/>
    </ligand>
</feature>
<feature type="binding site" evidence="7 9">
    <location>
        <position position="194"/>
    </location>
    <ligand>
        <name>FAD</name>
        <dbReference type="ChEBI" id="CHEBI:57692"/>
    </ligand>
</feature>
<feature type="binding site" evidence="7 9">
    <location>
        <position position="201"/>
    </location>
    <ligand>
        <name>FAD</name>
        <dbReference type="ChEBI" id="CHEBI:57692"/>
    </ligand>
</feature>
<feature type="binding site">
    <location>
        <position position="223"/>
    </location>
    <ligand>
        <name>Zn(2+)</name>
        <dbReference type="ChEBI" id="CHEBI:29105"/>
    </ligand>
</feature>
<feature type="modified residue" description="Phosphoserine" evidence="16">
    <location>
        <position position="80"/>
    </location>
</feature>
<feature type="modified residue" description="Phosphoserine" evidence="16">
    <location>
        <position position="197"/>
    </location>
</feature>
<feature type="sequence variant" id="VAR_021399" description="In dbSNP:rs28383623." evidence="13">
    <original>K</original>
    <variation>R</variation>
    <location>
        <position position="16"/>
    </location>
</feature>
<feature type="sequence variant" id="VAR_021400" description="In dbSNP:rs17136117." evidence="13">
    <original>E</original>
    <variation>G</variation>
    <location>
        <position position="29"/>
    </location>
</feature>
<feature type="sequence variant" id="VAR_021401" description="In dbSNP:rs1143684." evidence="1 4 6 10 12 13 14">
    <original>L</original>
    <variation>F</variation>
    <location>
        <position position="47"/>
    </location>
</feature>
<feature type="sequence variant" id="VAR_021402" description="In dbSNP:rs17300141." evidence="13">
    <original>G</original>
    <variation>D</variation>
    <location>
        <position position="58"/>
    </location>
</feature>
<feature type="sequence variant" id="VAR_021403" description="In dbSNP:rs28383651." evidence="13">
    <original>V</original>
    <variation>A</variation>
    <location>
        <position position="184"/>
    </location>
</feature>
<feature type="mutagenesis site" description="Loss of activity toward CB1954, no effect toward menadione." evidence="5">
    <original>N</original>
    <variation>H</variation>
    <location>
        <position position="162"/>
    </location>
</feature>
<feature type="sequence conflict" description="In Ref. 2; AAB60642." evidence="15" ref="2">
    <original>G</original>
    <variation>C</variation>
    <location>
        <position position="140"/>
    </location>
</feature>
<feature type="strand" evidence="20">
    <location>
        <begin position="5"/>
        <end position="10"/>
    </location>
</feature>
<feature type="helix" evidence="20">
    <location>
        <begin position="18"/>
        <end position="33"/>
    </location>
</feature>
<feature type="strand" evidence="20">
    <location>
        <begin position="36"/>
        <end position="41"/>
    </location>
</feature>
<feature type="turn" evidence="20">
    <location>
        <begin position="42"/>
        <end position="46"/>
    </location>
</feature>
<feature type="helix" evidence="20">
    <location>
        <begin position="53"/>
        <end position="55"/>
    </location>
</feature>
<feature type="strand" evidence="20">
    <location>
        <begin position="63"/>
        <end position="65"/>
    </location>
</feature>
<feature type="helix" evidence="20">
    <location>
        <begin position="68"/>
        <end position="77"/>
    </location>
</feature>
<feature type="helix" evidence="20">
    <location>
        <begin position="83"/>
        <end position="94"/>
    </location>
</feature>
<feature type="strand" evidence="20">
    <location>
        <begin position="96"/>
        <end position="103"/>
    </location>
</feature>
<feature type="strand" evidence="19">
    <location>
        <begin position="105"/>
        <end position="108"/>
    </location>
</feature>
<feature type="helix" evidence="20">
    <location>
        <begin position="111"/>
        <end position="120"/>
    </location>
</feature>
<feature type="turn" evidence="20">
    <location>
        <begin position="123"/>
        <end position="125"/>
    </location>
</feature>
<feature type="strand" evidence="18">
    <location>
        <begin position="129"/>
        <end position="132"/>
    </location>
</feature>
<feature type="helix" evidence="20">
    <location>
        <begin position="133"/>
        <end position="135"/>
    </location>
</feature>
<feature type="turn" evidence="20">
    <location>
        <begin position="137"/>
        <end position="140"/>
    </location>
</feature>
<feature type="strand" evidence="20">
    <location>
        <begin position="142"/>
        <end position="148"/>
    </location>
</feature>
<feature type="turn" evidence="20">
    <location>
        <begin position="153"/>
        <end position="156"/>
    </location>
</feature>
<feature type="strand" evidence="17">
    <location>
        <begin position="160"/>
        <end position="162"/>
    </location>
</feature>
<feature type="helix" evidence="20">
    <location>
        <begin position="165"/>
        <end position="173"/>
    </location>
</feature>
<feature type="helix" evidence="20">
    <location>
        <begin position="174"/>
        <end position="178"/>
    </location>
</feature>
<feature type="turn" evidence="20">
    <location>
        <begin position="179"/>
        <end position="181"/>
    </location>
</feature>
<feature type="strand" evidence="20">
    <location>
        <begin position="188"/>
        <end position="190"/>
    </location>
</feature>
<feature type="turn" evidence="20">
    <location>
        <begin position="193"/>
        <end position="195"/>
    </location>
</feature>
<feature type="helix" evidence="20">
    <location>
        <begin position="198"/>
        <end position="212"/>
    </location>
</feature>
<feature type="helix" evidence="20">
    <location>
        <begin position="213"/>
        <end position="217"/>
    </location>
</feature>
<feature type="helix" evidence="20">
    <location>
        <begin position="225"/>
        <end position="229"/>
    </location>
</feature>
<protein>
    <recommendedName>
        <fullName>Ribosyldihydronicotinamide dehydrogenase [quinone]</fullName>
        <ecNumber evidence="8">1.10.5.1</ecNumber>
    </recommendedName>
    <alternativeName>
        <fullName>NRH dehydrogenase [quinone] 2</fullName>
    </alternativeName>
    <alternativeName>
        <fullName>NRH:quinone oxidoreductase 2</fullName>
    </alternativeName>
    <alternativeName>
        <fullName>Quinone reductase 2</fullName>
        <shortName>QR2</shortName>
    </alternativeName>
</protein>
<dbReference type="EC" id="1.10.5.1" evidence="8"/>
<dbReference type="EMBL" id="J02888">
    <property type="protein sequence ID" value="AAA60239.1"/>
    <property type="molecule type" value="mRNA"/>
</dbReference>
<dbReference type="EMBL" id="AY299456">
    <property type="protein sequence ID" value="AAB60642.3"/>
    <property type="molecule type" value="Genomic_DNA"/>
</dbReference>
<dbReference type="EMBL" id="AB050248">
    <property type="protein sequence ID" value="BAB16974.1"/>
    <property type="molecule type" value="Genomic_DNA"/>
</dbReference>
<dbReference type="EMBL" id="AY855291">
    <property type="protein sequence ID" value="AAW29945.1"/>
    <property type="molecule type" value="Genomic_DNA"/>
</dbReference>
<dbReference type="EMBL" id="AK311746">
    <property type="protein sequence ID" value="BAG34689.1"/>
    <property type="molecule type" value="mRNA"/>
</dbReference>
<dbReference type="EMBL" id="AL133351">
    <property type="status" value="NOT_ANNOTATED_CDS"/>
    <property type="molecule type" value="Genomic_DNA"/>
</dbReference>
<dbReference type="EMBL" id="CH471087">
    <property type="protein sequence ID" value="EAW55107.1"/>
    <property type="molecule type" value="Genomic_DNA"/>
</dbReference>
<dbReference type="EMBL" id="BC006096">
    <property type="protein sequence ID" value="AAH06096.1"/>
    <property type="molecule type" value="mRNA"/>
</dbReference>
<dbReference type="CCDS" id="CCDS4481.1"/>
<dbReference type="PIR" id="A32667">
    <property type="entry name" value="A32667"/>
</dbReference>
<dbReference type="RefSeq" id="NP_000895.2">
    <property type="nucleotide sequence ID" value="NM_000904.6"/>
</dbReference>
<dbReference type="RefSeq" id="NP_001277150.1">
    <property type="nucleotide sequence ID" value="NM_001290221.2"/>
</dbReference>
<dbReference type="RefSeq" id="NP_001305869.1">
    <property type="nucleotide sequence ID" value="NM_001318940.2"/>
</dbReference>
<dbReference type="PDB" id="1QR2">
    <property type="method" value="X-ray"/>
    <property type="resolution" value="2.10 A"/>
    <property type="chains" value="A/B=2-231"/>
</dbReference>
<dbReference type="PDB" id="1SG0">
    <property type="method" value="X-ray"/>
    <property type="resolution" value="1.50 A"/>
    <property type="chains" value="A/B=2-231"/>
</dbReference>
<dbReference type="PDB" id="1XI2">
    <property type="method" value="X-ray"/>
    <property type="resolution" value="1.50 A"/>
    <property type="chains" value="A/B=2-231"/>
</dbReference>
<dbReference type="PDB" id="1ZX1">
    <property type="method" value="X-ray"/>
    <property type="resolution" value="2.16 A"/>
    <property type="chains" value="A/B=1-231"/>
</dbReference>
<dbReference type="PDB" id="2BZS">
    <property type="method" value="X-ray"/>
    <property type="resolution" value="2.00 A"/>
    <property type="chains" value="A/B=2-231"/>
</dbReference>
<dbReference type="PDB" id="2QMY">
    <property type="method" value="X-ray"/>
    <property type="resolution" value="2.50 A"/>
    <property type="chains" value="A/B=2-231"/>
</dbReference>
<dbReference type="PDB" id="2QMZ">
    <property type="method" value="X-ray"/>
    <property type="resolution" value="2.10 A"/>
    <property type="chains" value="A/B=2-231"/>
</dbReference>
<dbReference type="PDB" id="2QR2">
    <property type="method" value="X-ray"/>
    <property type="resolution" value="2.45 A"/>
    <property type="chains" value="A/B=2-231"/>
</dbReference>
<dbReference type="PDB" id="2QWX">
    <property type="method" value="X-ray"/>
    <property type="resolution" value="1.50 A"/>
    <property type="chains" value="A/B=1-231"/>
</dbReference>
<dbReference type="PDB" id="2QX4">
    <property type="method" value="X-ray"/>
    <property type="resolution" value="1.65 A"/>
    <property type="chains" value="A/B=2-231"/>
</dbReference>
<dbReference type="PDB" id="2QX6">
    <property type="method" value="X-ray"/>
    <property type="resolution" value="1.75 A"/>
    <property type="chains" value="A/B=2-231"/>
</dbReference>
<dbReference type="PDB" id="2QX8">
    <property type="method" value="X-ray"/>
    <property type="resolution" value="1.60 A"/>
    <property type="chains" value="A/B=2-231"/>
</dbReference>
<dbReference type="PDB" id="2QX9">
    <property type="method" value="X-ray"/>
    <property type="resolution" value="2.31 A"/>
    <property type="chains" value="A/B=2-231"/>
</dbReference>
<dbReference type="PDB" id="3FW1">
    <property type="method" value="X-ray"/>
    <property type="resolution" value="1.75 A"/>
    <property type="chains" value="A=1-231"/>
</dbReference>
<dbReference type="PDB" id="3G5M">
    <property type="method" value="X-ray"/>
    <property type="resolution" value="1.84 A"/>
    <property type="chains" value="A/B=1-231"/>
</dbReference>
<dbReference type="PDB" id="3GAM">
    <property type="method" value="X-ray"/>
    <property type="resolution" value="1.98 A"/>
    <property type="chains" value="A/B=1-231"/>
</dbReference>
<dbReference type="PDB" id="3NFR">
    <property type="method" value="X-ray"/>
    <property type="resolution" value="1.57 A"/>
    <property type="chains" value="A/B=2-231"/>
</dbReference>
<dbReference type="PDB" id="3NHF">
    <property type="method" value="X-ray"/>
    <property type="resolution" value="2.00 A"/>
    <property type="chains" value="A/B=2-231"/>
</dbReference>
<dbReference type="PDB" id="3NHJ">
    <property type="method" value="X-ray"/>
    <property type="resolution" value="2.33 A"/>
    <property type="chains" value="A/B=2-231"/>
</dbReference>
<dbReference type="PDB" id="3NHK">
    <property type="method" value="X-ray"/>
    <property type="resolution" value="1.96 A"/>
    <property type="chains" value="A/B=2-231"/>
</dbReference>
<dbReference type="PDB" id="3NHL">
    <property type="method" value="X-ray"/>
    <property type="resolution" value="1.57 A"/>
    <property type="chains" value="A/B=2-231"/>
</dbReference>
<dbReference type="PDB" id="3NHP">
    <property type="method" value="X-ray"/>
    <property type="resolution" value="1.70 A"/>
    <property type="chains" value="A/B=2-231"/>
</dbReference>
<dbReference type="PDB" id="3NHR">
    <property type="method" value="X-ray"/>
    <property type="resolution" value="1.80 A"/>
    <property type="chains" value="A/B=2-231"/>
</dbReference>
<dbReference type="PDB" id="3NHS">
    <property type="method" value="X-ray"/>
    <property type="resolution" value="1.78 A"/>
    <property type="chains" value="A/B=2-231"/>
</dbReference>
<dbReference type="PDB" id="3NHU">
    <property type="method" value="X-ray"/>
    <property type="resolution" value="1.90 A"/>
    <property type="chains" value="A/B=2-231"/>
</dbReference>
<dbReference type="PDB" id="3NHW">
    <property type="method" value="X-ray"/>
    <property type="resolution" value="1.65 A"/>
    <property type="chains" value="A/B=2-231"/>
</dbReference>
<dbReference type="PDB" id="3NHY">
    <property type="method" value="X-ray"/>
    <property type="resolution" value="1.90 A"/>
    <property type="chains" value="A/B=2-231"/>
</dbReference>
<dbReference type="PDB" id="3O2N">
    <property type="method" value="X-ray"/>
    <property type="resolution" value="1.60 A"/>
    <property type="chains" value="A/B=2-231"/>
</dbReference>
<dbReference type="PDB" id="3O73">
    <property type="method" value="X-ray"/>
    <property type="resolution" value="2.00 A"/>
    <property type="chains" value="A/B=1-231"/>
</dbReference>
<dbReference type="PDB" id="3OVM">
    <property type="method" value="X-ray"/>
    <property type="resolution" value="2.09 A"/>
    <property type="chains" value="A/B=1-231"/>
</dbReference>
<dbReference type="PDB" id="3OWH">
    <property type="method" value="X-ray"/>
    <property type="resolution" value="2.28 A"/>
    <property type="chains" value="A/B=1-231"/>
</dbReference>
<dbReference type="PDB" id="3OWX">
    <property type="method" value="X-ray"/>
    <property type="resolution" value="1.85 A"/>
    <property type="chains" value="A/B=1-231"/>
</dbReference>
<dbReference type="PDB" id="3OX1">
    <property type="method" value="X-ray"/>
    <property type="resolution" value="2.00 A"/>
    <property type="chains" value="A/B=1-231"/>
</dbReference>
<dbReference type="PDB" id="3OX2">
    <property type="method" value="X-ray"/>
    <property type="resolution" value="2.41 A"/>
    <property type="chains" value="A/B=1-231"/>
</dbReference>
<dbReference type="PDB" id="3OX3">
    <property type="method" value="X-ray"/>
    <property type="resolution" value="1.80 A"/>
    <property type="chains" value="A/B=1-231"/>
</dbReference>
<dbReference type="PDB" id="3TE7">
    <property type="method" value="X-ray"/>
    <property type="resolution" value="1.70 A"/>
    <property type="chains" value="A/B=3-230"/>
</dbReference>
<dbReference type="PDB" id="3TEM">
    <property type="method" value="X-ray"/>
    <property type="resolution" value="1.45 A"/>
    <property type="chains" value="A/B=3-230"/>
</dbReference>
<dbReference type="PDB" id="3TZB">
    <property type="method" value="X-ray"/>
    <property type="resolution" value="2.19 A"/>
    <property type="chains" value="A/B/C/D=3-230"/>
</dbReference>
<dbReference type="PDB" id="3UXE">
    <property type="method" value="X-ray"/>
    <property type="resolution" value="1.50 A"/>
    <property type="chains" value="A/B=2-231"/>
</dbReference>
<dbReference type="PDB" id="3UXH">
    <property type="method" value="X-ray"/>
    <property type="resolution" value="1.53 A"/>
    <property type="chains" value="A/B=2-231"/>
</dbReference>
<dbReference type="PDB" id="4FGJ">
    <property type="method" value="X-ray"/>
    <property type="resolution" value="1.35 A"/>
    <property type="chains" value="A/B=1-231"/>
</dbReference>
<dbReference type="PDB" id="4FGK">
    <property type="method" value="X-ray"/>
    <property type="resolution" value="1.40 A"/>
    <property type="chains" value="A/B=1-231"/>
</dbReference>
<dbReference type="PDB" id="4FGL">
    <property type="method" value="X-ray"/>
    <property type="resolution" value="1.20 A"/>
    <property type="chains" value="A/B/C/D=1-231"/>
</dbReference>
<dbReference type="PDB" id="4GQI">
    <property type="method" value="X-ray"/>
    <property type="resolution" value="1.95 A"/>
    <property type="chains" value="A/B=2-231"/>
</dbReference>
<dbReference type="PDB" id="4GR9">
    <property type="method" value="X-ray"/>
    <property type="resolution" value="2.29 A"/>
    <property type="chains" value="A/B=2-231"/>
</dbReference>
<dbReference type="PDB" id="4QOD">
    <property type="method" value="X-ray"/>
    <property type="resolution" value="1.35 A"/>
    <property type="chains" value="A/B=1-231"/>
</dbReference>
<dbReference type="PDB" id="4QOE">
    <property type="method" value="X-ray"/>
    <property type="resolution" value="1.45 A"/>
    <property type="chains" value="A/B=1-231"/>
</dbReference>
<dbReference type="PDB" id="4QOF">
    <property type="method" value="X-ray"/>
    <property type="resolution" value="1.55 A"/>
    <property type="chains" value="A/B=1-231"/>
</dbReference>
<dbReference type="PDB" id="4QOG">
    <property type="method" value="X-ray"/>
    <property type="resolution" value="1.40 A"/>
    <property type="chains" value="A/B=1-231"/>
</dbReference>
<dbReference type="PDB" id="4QOH">
    <property type="method" value="X-ray"/>
    <property type="resolution" value="1.60 A"/>
    <property type="chains" value="A/B=1-231"/>
</dbReference>
<dbReference type="PDB" id="4QOI">
    <property type="method" value="X-ray"/>
    <property type="resolution" value="1.55 A"/>
    <property type="chains" value="A/B=1-231"/>
</dbReference>
<dbReference type="PDB" id="4QOJ">
    <property type="method" value="X-ray"/>
    <property type="resolution" value="1.85 A"/>
    <property type="chains" value="A/B=1-231"/>
</dbReference>
<dbReference type="PDB" id="4U7F">
    <property type="method" value="X-ray"/>
    <property type="resolution" value="1.80 A"/>
    <property type="chains" value="A/B=2-231"/>
</dbReference>
<dbReference type="PDB" id="4U7G">
    <property type="method" value="X-ray"/>
    <property type="resolution" value="1.96 A"/>
    <property type="chains" value="A/B=2-231"/>
</dbReference>
<dbReference type="PDB" id="4U7H">
    <property type="method" value="X-ray"/>
    <property type="resolution" value="1.48 A"/>
    <property type="chains" value="A/B=2-231"/>
</dbReference>
<dbReference type="PDB" id="4XDG">
    <property type="method" value="X-ray"/>
    <property type="resolution" value="1.50 A"/>
    <property type="chains" value="A/B=1-231"/>
</dbReference>
<dbReference type="PDB" id="4XDH">
    <property type="method" value="X-ray"/>
    <property type="resolution" value="1.90 A"/>
    <property type="chains" value="A/B=1-231"/>
</dbReference>
<dbReference type="PDB" id="4ZVK">
    <property type="method" value="X-ray"/>
    <property type="resolution" value="1.87 A"/>
    <property type="chains" value="A/B=2-231"/>
</dbReference>
<dbReference type="PDB" id="4ZVL">
    <property type="method" value="X-ray"/>
    <property type="resolution" value="1.90 A"/>
    <property type="chains" value="A/B=2-231"/>
</dbReference>
<dbReference type="PDB" id="4ZVM">
    <property type="method" value="X-ray"/>
    <property type="resolution" value="1.97 A"/>
    <property type="chains" value="A/B=2-231"/>
</dbReference>
<dbReference type="PDB" id="4ZVN">
    <property type="method" value="X-ray"/>
    <property type="resolution" value="1.87 A"/>
    <property type="chains" value="A/B=2-231"/>
</dbReference>
<dbReference type="PDB" id="5BUC">
    <property type="method" value="X-ray"/>
    <property type="resolution" value="1.87 A"/>
    <property type="chains" value="A/B=2-231"/>
</dbReference>
<dbReference type="PDB" id="5LBT">
    <property type="method" value="X-ray"/>
    <property type="resolution" value="1.75 A"/>
    <property type="chains" value="A/B=1-231"/>
</dbReference>
<dbReference type="PDB" id="5LBU">
    <property type="method" value="X-ray"/>
    <property type="resolution" value="1.65 A"/>
    <property type="chains" value="A/B=1-231"/>
</dbReference>
<dbReference type="PDB" id="5LBW">
    <property type="method" value="X-ray"/>
    <property type="resolution" value="1.90 A"/>
    <property type="chains" value="A/B=1-231"/>
</dbReference>
<dbReference type="PDB" id="5LBY">
    <property type="method" value="X-ray"/>
    <property type="resolution" value="1.40 A"/>
    <property type="chains" value="A/B=1-231"/>
</dbReference>
<dbReference type="PDB" id="5LBZ">
    <property type="method" value="X-ray"/>
    <property type="resolution" value="1.40 A"/>
    <property type="chains" value="A/B=1-231"/>
</dbReference>
<dbReference type="PDB" id="7O4D">
    <property type="method" value="X-ray"/>
    <property type="resolution" value="2.25 A"/>
    <property type="chains" value="A/B=1-231"/>
</dbReference>
<dbReference type="PDBsum" id="1QR2"/>
<dbReference type="PDBsum" id="1SG0"/>
<dbReference type="PDBsum" id="1XI2"/>
<dbReference type="PDBsum" id="1ZX1"/>
<dbReference type="PDBsum" id="2BZS"/>
<dbReference type="PDBsum" id="2QMY"/>
<dbReference type="PDBsum" id="2QMZ"/>
<dbReference type="PDBsum" id="2QR2"/>
<dbReference type="PDBsum" id="2QWX"/>
<dbReference type="PDBsum" id="2QX4"/>
<dbReference type="PDBsum" id="2QX6"/>
<dbReference type="PDBsum" id="2QX8"/>
<dbReference type="PDBsum" id="2QX9"/>
<dbReference type="PDBsum" id="3FW1"/>
<dbReference type="PDBsum" id="3G5M"/>
<dbReference type="PDBsum" id="3GAM"/>
<dbReference type="PDBsum" id="3NFR"/>
<dbReference type="PDBsum" id="3NHF"/>
<dbReference type="PDBsum" id="3NHJ"/>
<dbReference type="PDBsum" id="3NHK"/>
<dbReference type="PDBsum" id="3NHL"/>
<dbReference type="PDBsum" id="3NHP"/>
<dbReference type="PDBsum" id="3NHR"/>
<dbReference type="PDBsum" id="3NHS"/>
<dbReference type="PDBsum" id="3NHU"/>
<dbReference type="PDBsum" id="3NHW"/>
<dbReference type="PDBsum" id="3NHY"/>
<dbReference type="PDBsum" id="3O2N"/>
<dbReference type="PDBsum" id="3O73"/>
<dbReference type="PDBsum" id="3OVM"/>
<dbReference type="PDBsum" id="3OWH"/>
<dbReference type="PDBsum" id="3OWX"/>
<dbReference type="PDBsum" id="3OX1"/>
<dbReference type="PDBsum" id="3OX2"/>
<dbReference type="PDBsum" id="3OX3"/>
<dbReference type="PDBsum" id="3TE7"/>
<dbReference type="PDBsum" id="3TEM"/>
<dbReference type="PDBsum" id="3TZB"/>
<dbReference type="PDBsum" id="3UXE"/>
<dbReference type="PDBsum" id="3UXH"/>
<dbReference type="PDBsum" id="4FGJ"/>
<dbReference type="PDBsum" id="4FGK"/>
<dbReference type="PDBsum" id="4FGL"/>
<dbReference type="PDBsum" id="4GQI"/>
<dbReference type="PDBsum" id="4GR9"/>
<dbReference type="PDBsum" id="4QOD"/>
<dbReference type="PDBsum" id="4QOE"/>
<dbReference type="PDBsum" id="4QOF"/>
<dbReference type="PDBsum" id="4QOG"/>
<dbReference type="PDBsum" id="4QOH"/>
<dbReference type="PDBsum" id="4QOI"/>
<dbReference type="PDBsum" id="4QOJ"/>
<dbReference type="PDBsum" id="4U7F"/>
<dbReference type="PDBsum" id="4U7G"/>
<dbReference type="PDBsum" id="4U7H"/>
<dbReference type="PDBsum" id="4XDG"/>
<dbReference type="PDBsum" id="4XDH"/>
<dbReference type="PDBsum" id="4ZVK"/>
<dbReference type="PDBsum" id="4ZVL"/>
<dbReference type="PDBsum" id="4ZVM"/>
<dbReference type="PDBsum" id="4ZVN"/>
<dbReference type="PDBsum" id="5BUC"/>
<dbReference type="PDBsum" id="5LBT"/>
<dbReference type="PDBsum" id="5LBU"/>
<dbReference type="PDBsum" id="5LBW"/>
<dbReference type="PDBsum" id="5LBY"/>
<dbReference type="PDBsum" id="5LBZ"/>
<dbReference type="PDBsum" id="7O4D"/>
<dbReference type="SMR" id="P16083"/>
<dbReference type="BioGRID" id="110898">
    <property type="interactions" value="31"/>
</dbReference>
<dbReference type="CORUM" id="P16083"/>
<dbReference type="DIP" id="DIP-39704N"/>
<dbReference type="FunCoup" id="P16083">
    <property type="interactions" value="127"/>
</dbReference>
<dbReference type="IntAct" id="P16083">
    <property type="interactions" value="19"/>
</dbReference>
<dbReference type="MINT" id="P16083"/>
<dbReference type="STRING" id="9606.ENSP00000369822"/>
<dbReference type="BindingDB" id="P16083"/>
<dbReference type="ChEMBL" id="CHEMBL3959"/>
<dbReference type="DrugBank" id="DB07339">
    <property type="generic name" value="(3S)-3-hydroxy-1-methyl-2,3-dihydro-1H-indole-5,6-dione"/>
</dbReference>
<dbReference type="DrugBank" id="DB03541">
    <property type="generic name" value="10-Propargyl-5,8-Dideazafolic Acid"/>
</dbReference>
<dbReference type="DrugBank" id="DB08228">
    <property type="generic name" value="5,8-dimethoxy-1,4-dimethylquinolin-2(1H)-one"/>
</dbReference>
<dbReference type="DrugBank" id="DB18950">
    <property type="generic name" value="Caricotamide"/>
</dbReference>
<dbReference type="DrugBank" id="DB08744">
    <property type="generic name" value="Casimiroin"/>
</dbReference>
<dbReference type="DrugBank" id="DB06695">
    <property type="generic name" value="Dabigatran etexilate"/>
</dbReference>
<dbReference type="DrugBank" id="DB03147">
    <property type="generic name" value="Flavin adenine dinucleotide"/>
</dbReference>
<dbReference type="DrugBank" id="DB01065">
    <property type="generic name" value="Melatonin"/>
</dbReference>
<dbReference type="DrugBank" id="DB00170">
    <property type="generic name" value="Menadione"/>
</dbReference>
<dbReference type="DrugBank" id="DB08190">
    <property type="generic name" value="N-[2-(2-iodo-5-methoxy-1H-indol-3-yl)ethyl]acetamide"/>
</dbReference>
<dbReference type="DrugBank" id="DB00157">
    <property type="generic name" value="NADH"/>
</dbReference>
<dbReference type="DrugBank" id="DB01087">
    <property type="generic name" value="Primaquine"/>
</dbReference>
<dbReference type="DrugBank" id="DB04216">
    <property type="generic name" value="Quercetin"/>
</dbReference>
<dbReference type="DrugBank" id="DB02709">
    <property type="generic name" value="Resveratrol"/>
</dbReference>
<dbReference type="DrugBank" id="DB04253">
    <property type="generic name" value="Tretazicar"/>
</dbReference>
<dbReference type="DrugCentral" id="P16083"/>
<dbReference type="iPTMnet" id="P16083"/>
<dbReference type="PhosphoSitePlus" id="P16083"/>
<dbReference type="BioMuta" id="NQO2"/>
<dbReference type="DMDM" id="317373581"/>
<dbReference type="jPOST" id="P16083"/>
<dbReference type="MassIVE" id="P16083"/>
<dbReference type="PaxDb" id="9606-ENSP00000369822"/>
<dbReference type="PeptideAtlas" id="P16083"/>
<dbReference type="ProteomicsDB" id="53285"/>
<dbReference type="Pumba" id="P16083"/>
<dbReference type="Antibodypedia" id="9328">
    <property type="antibodies" value="559 antibodies from 34 providers"/>
</dbReference>
<dbReference type="DNASU" id="4835"/>
<dbReference type="Ensembl" id="ENST00000338130.7">
    <property type="protein sequence ID" value="ENSP00000337773.2"/>
    <property type="gene ID" value="ENSG00000124588.22"/>
</dbReference>
<dbReference type="Ensembl" id="ENST00000380430.6">
    <property type="protein sequence ID" value="ENSP00000369795.1"/>
    <property type="gene ID" value="ENSG00000124588.22"/>
</dbReference>
<dbReference type="Ensembl" id="ENST00000380455.11">
    <property type="protein sequence ID" value="ENSP00000369822.4"/>
    <property type="gene ID" value="ENSG00000124588.22"/>
</dbReference>
<dbReference type="GeneID" id="4835"/>
<dbReference type="KEGG" id="hsa:4835"/>
<dbReference type="MANE-Select" id="ENST00000380455.11">
    <property type="protein sequence ID" value="ENSP00000369822.4"/>
    <property type="RefSeq nucleotide sequence ID" value="NM_000904.6"/>
    <property type="RefSeq protein sequence ID" value="NP_000895.2"/>
</dbReference>
<dbReference type="UCSC" id="uc003mus.3">
    <property type="organism name" value="human"/>
</dbReference>
<dbReference type="AGR" id="HGNC:7856"/>
<dbReference type="CTD" id="4835"/>
<dbReference type="DisGeNET" id="4835"/>
<dbReference type="GeneCards" id="NQO2"/>
<dbReference type="HGNC" id="HGNC:7856">
    <property type="gene designation" value="NQO2"/>
</dbReference>
<dbReference type="HPA" id="ENSG00000124588">
    <property type="expression patterns" value="Low tissue specificity"/>
</dbReference>
<dbReference type="MalaCards" id="NQO2"/>
<dbReference type="MIM" id="160998">
    <property type="type" value="gene"/>
</dbReference>
<dbReference type="neXtProt" id="NX_P16083"/>
<dbReference type="OpenTargets" id="ENSG00000124588"/>
<dbReference type="Orphanet" id="227535">
    <property type="disease" value="Hereditary breast cancer"/>
</dbReference>
<dbReference type="PharmGKB" id="PA31745"/>
<dbReference type="VEuPathDB" id="HostDB:ENSG00000124588"/>
<dbReference type="eggNOG" id="ENOG502QWY5">
    <property type="taxonomic scope" value="Eukaryota"/>
</dbReference>
<dbReference type="GeneTree" id="ENSGT00940000156563"/>
<dbReference type="HOGENOM" id="CLU_058643_2_0_1"/>
<dbReference type="InParanoid" id="P16083"/>
<dbReference type="OMA" id="GREHMFG"/>
<dbReference type="OrthoDB" id="26889at2759"/>
<dbReference type="PAN-GO" id="P16083">
    <property type="GO annotations" value="2 GO annotations based on evolutionary models"/>
</dbReference>
<dbReference type="PhylomeDB" id="P16083"/>
<dbReference type="TreeFam" id="TF300296"/>
<dbReference type="BRENDA" id="1.10.5.1">
    <property type="organism ID" value="2681"/>
</dbReference>
<dbReference type="PathwayCommons" id="P16083"/>
<dbReference type="Reactome" id="R-HSA-211945">
    <property type="pathway name" value="Phase I - Functionalization of compounds"/>
</dbReference>
<dbReference type="SABIO-RK" id="P16083"/>
<dbReference type="SignaLink" id="P16083"/>
<dbReference type="BioGRID-ORCS" id="4835">
    <property type="hits" value="8 hits in 1159 CRISPR screens"/>
</dbReference>
<dbReference type="ChiTaRS" id="NQO2">
    <property type="organism name" value="human"/>
</dbReference>
<dbReference type="EvolutionaryTrace" id="P16083"/>
<dbReference type="GeneWiki" id="NAD(P)H_dehydrogenase,_quinone_2"/>
<dbReference type="GenomeRNAi" id="4835"/>
<dbReference type="Pharos" id="P16083">
    <property type="development level" value="Tchem"/>
</dbReference>
<dbReference type="PRO" id="PR:P16083"/>
<dbReference type="Proteomes" id="UP000005640">
    <property type="component" value="Chromosome 6"/>
</dbReference>
<dbReference type="RNAct" id="P16083">
    <property type="molecule type" value="protein"/>
</dbReference>
<dbReference type="Bgee" id="ENSG00000124588">
    <property type="expression patterns" value="Expressed in left adrenal gland and 196 other cell types or tissues"/>
</dbReference>
<dbReference type="ExpressionAtlas" id="P16083">
    <property type="expression patterns" value="baseline and differential"/>
</dbReference>
<dbReference type="GO" id="GO:0005829">
    <property type="term" value="C:cytosol"/>
    <property type="evidence" value="ECO:0000314"/>
    <property type="project" value="CAFA"/>
</dbReference>
<dbReference type="GO" id="GO:0070062">
    <property type="term" value="C:extracellular exosome"/>
    <property type="evidence" value="ECO:0007005"/>
    <property type="project" value="UniProtKB"/>
</dbReference>
<dbReference type="GO" id="GO:0005654">
    <property type="term" value="C:nucleoplasm"/>
    <property type="evidence" value="ECO:0000314"/>
    <property type="project" value="HPA"/>
</dbReference>
<dbReference type="GO" id="GO:0031404">
    <property type="term" value="F:chloride ion binding"/>
    <property type="evidence" value="ECO:0000314"/>
    <property type="project" value="CAFA"/>
</dbReference>
<dbReference type="GO" id="GO:0001512">
    <property type="term" value="F:dihydronicotinamide riboside quinone reductase activity"/>
    <property type="evidence" value="ECO:0000314"/>
    <property type="project" value="CAFA"/>
</dbReference>
<dbReference type="GO" id="GO:0009055">
    <property type="term" value="F:electron transfer activity"/>
    <property type="evidence" value="ECO:0000314"/>
    <property type="project" value="CAFA"/>
</dbReference>
<dbReference type="GO" id="GO:0071949">
    <property type="term" value="F:FAD binding"/>
    <property type="evidence" value="ECO:0000314"/>
    <property type="project" value="CAFA"/>
</dbReference>
<dbReference type="GO" id="GO:1904408">
    <property type="term" value="F:melatonin binding"/>
    <property type="evidence" value="ECO:0000314"/>
    <property type="project" value="CAFA"/>
</dbReference>
<dbReference type="GO" id="GO:0003955">
    <property type="term" value="F:NAD(P)H dehydrogenase (quinone) activity"/>
    <property type="evidence" value="ECO:0000318"/>
    <property type="project" value="GO_Central"/>
</dbReference>
<dbReference type="GO" id="GO:0016491">
    <property type="term" value="F:oxidoreductase activity"/>
    <property type="evidence" value="ECO:0000314"/>
    <property type="project" value="CAFA"/>
</dbReference>
<dbReference type="GO" id="GO:0016661">
    <property type="term" value="F:oxidoreductase activity, acting on other nitrogenous compounds as donors"/>
    <property type="evidence" value="ECO:0000314"/>
    <property type="project" value="CAFA"/>
</dbReference>
<dbReference type="GO" id="GO:0042803">
    <property type="term" value="F:protein homodimerization activity"/>
    <property type="evidence" value="ECO:0000353"/>
    <property type="project" value="CAFA"/>
</dbReference>
<dbReference type="GO" id="GO:1905594">
    <property type="term" value="F:resveratrol binding"/>
    <property type="evidence" value="ECO:0000314"/>
    <property type="project" value="CAFA"/>
</dbReference>
<dbReference type="GO" id="GO:0008270">
    <property type="term" value="F:zinc ion binding"/>
    <property type="evidence" value="ECO:0000314"/>
    <property type="project" value="CAFA"/>
</dbReference>
<dbReference type="GO" id="GO:1901662">
    <property type="term" value="P:quinone catabolic process"/>
    <property type="evidence" value="ECO:0000314"/>
    <property type="project" value="CAFA"/>
</dbReference>
<dbReference type="FunFam" id="3.40.50.360:FF:000030">
    <property type="entry name" value="ribosyldihydronicotinamide dehydrogenase [quinone]"/>
    <property type="match status" value="1"/>
</dbReference>
<dbReference type="Gene3D" id="3.40.50.360">
    <property type="match status" value="1"/>
</dbReference>
<dbReference type="InterPro" id="IPR003680">
    <property type="entry name" value="Flavodoxin_fold"/>
</dbReference>
<dbReference type="InterPro" id="IPR029039">
    <property type="entry name" value="Flavoprotein-like_sf"/>
</dbReference>
<dbReference type="InterPro" id="IPR051545">
    <property type="entry name" value="NAD(P)H_dehydrogenase_qn"/>
</dbReference>
<dbReference type="PANTHER" id="PTHR10204">
    <property type="entry name" value="NAD P H OXIDOREDUCTASE-RELATED"/>
    <property type="match status" value="1"/>
</dbReference>
<dbReference type="PANTHER" id="PTHR10204:SF33">
    <property type="entry name" value="RIBOSYLDIHYDRONICOTINAMIDE DEHYDROGENASE [QUINONE]"/>
    <property type="match status" value="1"/>
</dbReference>
<dbReference type="Pfam" id="PF02525">
    <property type="entry name" value="Flavodoxin_2"/>
    <property type="match status" value="1"/>
</dbReference>
<dbReference type="SUPFAM" id="SSF52218">
    <property type="entry name" value="Flavoproteins"/>
    <property type="match status" value="1"/>
</dbReference>
<keyword id="KW-0002">3D-structure</keyword>
<keyword id="KW-0963">Cytoplasm</keyword>
<keyword id="KW-0274">FAD</keyword>
<keyword id="KW-0285">Flavoprotein</keyword>
<keyword id="KW-0479">Metal-binding</keyword>
<keyword id="KW-0560">Oxidoreductase</keyword>
<keyword id="KW-0597">Phosphoprotein</keyword>
<keyword id="KW-1267">Proteomics identification</keyword>
<keyword id="KW-1185">Reference proteome</keyword>
<keyword id="KW-0862">Zinc</keyword>
<proteinExistence type="evidence at protein level"/>
<organism>
    <name type="scientific">Homo sapiens</name>
    <name type="common">Human</name>
    <dbReference type="NCBI Taxonomy" id="9606"/>
    <lineage>
        <taxon>Eukaryota</taxon>
        <taxon>Metazoa</taxon>
        <taxon>Chordata</taxon>
        <taxon>Craniata</taxon>
        <taxon>Vertebrata</taxon>
        <taxon>Euteleostomi</taxon>
        <taxon>Mammalia</taxon>
        <taxon>Eutheria</taxon>
        <taxon>Euarchontoglires</taxon>
        <taxon>Primates</taxon>
        <taxon>Haplorrhini</taxon>
        <taxon>Catarrhini</taxon>
        <taxon>Hominidae</taxon>
        <taxon>Homo</taxon>
    </lineage>
</organism>
<comment type="function">
    <text evidence="7">The enzyme apparently serves as a quinone reductase in connection with conjugation reactions of hydroquinones involved in detoxification pathways as well as in biosynthetic processes such as the vitamin K-dependent gamma-carboxylation of glutamate residues in prothrombin synthesis.</text>
</comment>
<comment type="catalytic activity">
    <reaction evidence="8">
        <text>1-(beta-D-ribofuranosyl)-1,4-dihydronicotinamide + a quinone + H(+) = beta-nicotinamide D-riboside + a quinol</text>
        <dbReference type="Rhea" id="RHEA:12364"/>
        <dbReference type="ChEBI" id="CHEBI:15378"/>
        <dbReference type="ChEBI" id="CHEBI:15927"/>
        <dbReference type="ChEBI" id="CHEBI:24646"/>
        <dbReference type="ChEBI" id="CHEBI:55458"/>
        <dbReference type="ChEBI" id="CHEBI:132124"/>
        <dbReference type="EC" id="1.10.5.1"/>
    </reaction>
</comment>
<comment type="cofactor">
    <cofactor>
        <name>Zn(2+)</name>
        <dbReference type="ChEBI" id="CHEBI:29105"/>
    </cofactor>
    <text>Binds 1 zinc ion per subunit.</text>
</comment>
<comment type="cofactor">
    <cofactor>
        <name>FAD</name>
        <dbReference type="ChEBI" id="CHEBI:57692"/>
    </cofactor>
</comment>
<comment type="activity regulation">
    <text evidence="7">Inhibited by melatonin, resveratrol and 5-hydroxytryptamine.</text>
</comment>
<comment type="biophysicochemical properties">
    <kinetics>
        <KM evidence="2 11">28 uM for NRH</KM>
        <KM evidence="2 11">11.6 uM for menadione</KM>
        <KM evidence="2 11">252 uM for NADH</KM>
    </kinetics>
</comment>
<comment type="subunit">
    <text evidence="3 5 7 9">Homodimer.</text>
</comment>
<comment type="interaction">
    <interactant intactId="EBI-358466">
        <id>P16083</id>
    </interactant>
    <interactant intactId="EBI-742054">
        <id>Q96D03</id>
        <label>DDIT4L</label>
    </interactant>
    <organismsDiffer>false</organismsDiffer>
    <experiments>3</experiments>
</comment>
<comment type="interaction">
    <interactant intactId="EBI-358466">
        <id>P16083</id>
    </interactant>
    <interactant intactId="EBI-743105">
        <id>Q5JVL4</id>
        <label>EFHC1</label>
    </interactant>
    <organismsDiffer>false</organismsDiffer>
    <experiments>3</experiments>
</comment>
<comment type="interaction">
    <interactant intactId="EBI-358466">
        <id>P16083</id>
    </interactant>
    <interactant intactId="EBI-739467">
        <id>Q9H8Y8</id>
        <label>GORASP2</label>
    </interactant>
    <organismsDiffer>false</organismsDiffer>
    <experiments>5</experiments>
</comment>
<comment type="interaction">
    <interactant intactId="EBI-358466">
        <id>P16083</id>
    </interactant>
    <interactant intactId="EBI-1805738">
        <id>Q8IWL3</id>
        <label>HSCB</label>
    </interactant>
    <organismsDiffer>false</organismsDiffer>
    <experiments>4</experiments>
</comment>
<comment type="interaction">
    <interactant intactId="EBI-358466">
        <id>P16083</id>
    </interactant>
    <interactant intactId="EBI-10171988">
        <id>A1L1C6</id>
        <label>LRRC7</label>
    </interactant>
    <organismsDiffer>false</organismsDiffer>
    <experiments>6</experiments>
</comment>
<comment type="interaction">
    <interactant intactId="EBI-358466">
        <id>P16083</id>
    </interactant>
    <interactant intactId="EBI-742688">
        <id>Q9NZD8</id>
        <label>SPG21</label>
    </interactant>
    <organismsDiffer>false</organismsDiffer>
    <experiments>3</experiments>
</comment>
<comment type="subcellular location">
    <subcellularLocation>
        <location>Cytoplasm</location>
    </subcellularLocation>
</comment>
<comment type="miscellaneous">
    <text>Uses dihydronicotinamide riboside (NRH) rather than NAD(P)H as an electron donor.</text>
</comment>
<comment type="similarity">
    <text evidence="15">Belongs to the NAD(P)H dehydrogenase (quinone) family.</text>
</comment>
<name>NQO2_HUMAN</name>
<reference key="1">
    <citation type="journal article" date="1990" name="Biochemistry">
        <title>Nucleotide and deduced amino acid sequence of a human cDNA (NQO2) corresponding to a second member of the NAD(P)H:quinone oxidoreductase gene family. Extensive polymorphism at the NQO2 gene locus on chromosome 6.</title>
        <authorList>
            <person name="Jaiswal A.K."/>
            <person name="Burnett P."/>
            <person name="Adesnik M."/>
            <person name="McBride O.W."/>
        </authorList>
    </citation>
    <scope>NUCLEOTIDE SEQUENCE [MRNA]</scope>
    <scope>VARIANT PHE-47</scope>
    <source>
        <tissue>Liver</tissue>
    </source>
</reference>
<reference key="2">
    <citation type="journal article" date="1994" name="J. Biol. Chem.">
        <title>Human NAD(P)H:quinone oxidoreductase 2. Gene structure, activity, and tissue-specific expression.</title>
        <authorList>
            <person name="Jaiswal A.K."/>
        </authorList>
    </citation>
    <scope>NUCLEOTIDE SEQUENCE [GENOMIC DNA]</scope>
    <scope>VARIANT PHE-47</scope>
    <source>
        <tissue>Liver</tissue>
    </source>
</reference>
<reference key="3">
    <citation type="submission" date="2000-10" db="EMBL/GenBank/DDBJ databases">
        <title>Human NRH:quinone oxidoreductase 2, complete genomic sequence.</title>
        <authorList>
            <person name="Iida A."/>
            <person name="Osawa S."/>
            <person name="Kitamura Y."/>
            <person name="Kitamoto T."/>
            <person name="Koyama K."/>
            <person name="Nakamura Y."/>
        </authorList>
    </citation>
    <scope>NUCLEOTIDE SEQUENCE [GENOMIC DNA]</scope>
    <scope>VARIANT PHE-47</scope>
</reference>
<reference key="4">
    <citation type="submission" date="2004-12" db="EMBL/GenBank/DDBJ databases">
        <authorList>
            <consortium name="NIEHS SNPs program"/>
        </authorList>
    </citation>
    <scope>NUCLEOTIDE SEQUENCE [GENOMIC DNA]</scope>
    <scope>VARIANTS ARG-16; GLY-29; PHE-47; ASP-58 AND ALA-184</scope>
</reference>
<reference key="5">
    <citation type="journal article" date="2004" name="Nat. Genet.">
        <title>Complete sequencing and characterization of 21,243 full-length human cDNAs.</title>
        <authorList>
            <person name="Ota T."/>
            <person name="Suzuki Y."/>
            <person name="Nishikawa T."/>
            <person name="Otsuki T."/>
            <person name="Sugiyama T."/>
            <person name="Irie R."/>
            <person name="Wakamatsu A."/>
            <person name="Hayashi K."/>
            <person name="Sato H."/>
            <person name="Nagai K."/>
            <person name="Kimura K."/>
            <person name="Makita H."/>
            <person name="Sekine M."/>
            <person name="Obayashi M."/>
            <person name="Nishi T."/>
            <person name="Shibahara T."/>
            <person name="Tanaka T."/>
            <person name="Ishii S."/>
            <person name="Yamamoto J."/>
            <person name="Saito K."/>
            <person name="Kawai Y."/>
            <person name="Isono Y."/>
            <person name="Nakamura Y."/>
            <person name="Nagahari K."/>
            <person name="Murakami K."/>
            <person name="Yasuda T."/>
            <person name="Iwayanagi T."/>
            <person name="Wagatsuma M."/>
            <person name="Shiratori A."/>
            <person name="Sudo H."/>
            <person name="Hosoiri T."/>
            <person name="Kaku Y."/>
            <person name="Kodaira H."/>
            <person name="Kondo H."/>
            <person name="Sugawara M."/>
            <person name="Takahashi M."/>
            <person name="Kanda K."/>
            <person name="Yokoi T."/>
            <person name="Furuya T."/>
            <person name="Kikkawa E."/>
            <person name="Omura Y."/>
            <person name="Abe K."/>
            <person name="Kamihara K."/>
            <person name="Katsuta N."/>
            <person name="Sato K."/>
            <person name="Tanikawa M."/>
            <person name="Yamazaki M."/>
            <person name="Ninomiya K."/>
            <person name="Ishibashi T."/>
            <person name="Yamashita H."/>
            <person name="Murakawa K."/>
            <person name="Fujimori K."/>
            <person name="Tanai H."/>
            <person name="Kimata M."/>
            <person name="Watanabe M."/>
            <person name="Hiraoka S."/>
            <person name="Chiba Y."/>
            <person name="Ishida S."/>
            <person name="Ono Y."/>
            <person name="Takiguchi S."/>
            <person name="Watanabe S."/>
            <person name="Yosida M."/>
            <person name="Hotuta T."/>
            <person name="Kusano J."/>
            <person name="Kanehori K."/>
            <person name="Takahashi-Fujii A."/>
            <person name="Hara H."/>
            <person name="Tanase T.-O."/>
            <person name="Nomura Y."/>
            <person name="Togiya S."/>
            <person name="Komai F."/>
            <person name="Hara R."/>
            <person name="Takeuchi K."/>
            <person name="Arita M."/>
            <person name="Imose N."/>
            <person name="Musashino K."/>
            <person name="Yuuki H."/>
            <person name="Oshima A."/>
            <person name="Sasaki N."/>
            <person name="Aotsuka S."/>
            <person name="Yoshikawa Y."/>
            <person name="Matsunawa H."/>
            <person name="Ichihara T."/>
            <person name="Shiohata N."/>
            <person name="Sano S."/>
            <person name="Moriya S."/>
            <person name="Momiyama H."/>
            <person name="Satoh N."/>
            <person name="Takami S."/>
            <person name="Terashima Y."/>
            <person name="Suzuki O."/>
            <person name="Nakagawa S."/>
            <person name="Senoh A."/>
            <person name="Mizoguchi H."/>
            <person name="Goto Y."/>
            <person name="Shimizu F."/>
            <person name="Wakebe H."/>
            <person name="Hishigaki H."/>
            <person name="Watanabe T."/>
            <person name="Sugiyama A."/>
            <person name="Takemoto M."/>
            <person name="Kawakami B."/>
            <person name="Yamazaki M."/>
            <person name="Watanabe K."/>
            <person name="Kumagai A."/>
            <person name="Itakura S."/>
            <person name="Fukuzumi Y."/>
            <person name="Fujimori Y."/>
            <person name="Komiyama M."/>
            <person name="Tashiro H."/>
            <person name="Tanigami A."/>
            <person name="Fujiwara T."/>
            <person name="Ono T."/>
            <person name="Yamada K."/>
            <person name="Fujii Y."/>
            <person name="Ozaki K."/>
            <person name="Hirao M."/>
            <person name="Ohmori Y."/>
            <person name="Kawabata A."/>
            <person name="Hikiji T."/>
            <person name="Kobatake N."/>
            <person name="Inagaki H."/>
            <person name="Ikema Y."/>
            <person name="Okamoto S."/>
            <person name="Okitani R."/>
            <person name="Kawakami T."/>
            <person name="Noguchi S."/>
            <person name="Itoh T."/>
            <person name="Shigeta K."/>
            <person name="Senba T."/>
            <person name="Matsumura K."/>
            <person name="Nakajima Y."/>
            <person name="Mizuno T."/>
            <person name="Morinaga M."/>
            <person name="Sasaki M."/>
            <person name="Togashi T."/>
            <person name="Oyama M."/>
            <person name="Hata H."/>
            <person name="Watanabe M."/>
            <person name="Komatsu T."/>
            <person name="Mizushima-Sugano J."/>
            <person name="Satoh T."/>
            <person name="Shirai Y."/>
            <person name="Takahashi Y."/>
            <person name="Nakagawa K."/>
            <person name="Okumura K."/>
            <person name="Nagase T."/>
            <person name="Nomura N."/>
            <person name="Kikuchi H."/>
            <person name="Masuho Y."/>
            <person name="Yamashita R."/>
            <person name="Nakai K."/>
            <person name="Yada T."/>
            <person name="Nakamura Y."/>
            <person name="Ohara O."/>
            <person name="Isogai T."/>
            <person name="Sugano S."/>
        </authorList>
    </citation>
    <scope>NUCLEOTIDE SEQUENCE [LARGE SCALE MRNA]</scope>
    <scope>VARIANT PHE-47</scope>
    <source>
        <tissue>Cerebellum</tissue>
    </source>
</reference>
<reference key="6">
    <citation type="journal article" date="2003" name="Nature">
        <title>The DNA sequence and analysis of human chromosome 6.</title>
        <authorList>
            <person name="Mungall A.J."/>
            <person name="Palmer S.A."/>
            <person name="Sims S.K."/>
            <person name="Edwards C.A."/>
            <person name="Ashurst J.L."/>
            <person name="Wilming L."/>
            <person name="Jones M.C."/>
            <person name="Horton R."/>
            <person name="Hunt S.E."/>
            <person name="Scott C.E."/>
            <person name="Gilbert J.G.R."/>
            <person name="Clamp M.E."/>
            <person name="Bethel G."/>
            <person name="Milne S."/>
            <person name="Ainscough R."/>
            <person name="Almeida J.P."/>
            <person name="Ambrose K.D."/>
            <person name="Andrews T.D."/>
            <person name="Ashwell R.I.S."/>
            <person name="Babbage A.K."/>
            <person name="Bagguley C.L."/>
            <person name="Bailey J."/>
            <person name="Banerjee R."/>
            <person name="Barker D.J."/>
            <person name="Barlow K.F."/>
            <person name="Bates K."/>
            <person name="Beare D.M."/>
            <person name="Beasley H."/>
            <person name="Beasley O."/>
            <person name="Bird C.P."/>
            <person name="Blakey S.E."/>
            <person name="Bray-Allen S."/>
            <person name="Brook J."/>
            <person name="Brown A.J."/>
            <person name="Brown J.Y."/>
            <person name="Burford D.C."/>
            <person name="Burrill W."/>
            <person name="Burton J."/>
            <person name="Carder C."/>
            <person name="Carter N.P."/>
            <person name="Chapman J.C."/>
            <person name="Clark S.Y."/>
            <person name="Clark G."/>
            <person name="Clee C.M."/>
            <person name="Clegg S."/>
            <person name="Cobley V."/>
            <person name="Collier R.E."/>
            <person name="Collins J.E."/>
            <person name="Colman L.K."/>
            <person name="Corby N.R."/>
            <person name="Coville G.J."/>
            <person name="Culley K.M."/>
            <person name="Dhami P."/>
            <person name="Davies J."/>
            <person name="Dunn M."/>
            <person name="Earthrowl M.E."/>
            <person name="Ellington A.E."/>
            <person name="Evans K.A."/>
            <person name="Faulkner L."/>
            <person name="Francis M.D."/>
            <person name="Frankish A."/>
            <person name="Frankland J."/>
            <person name="French L."/>
            <person name="Garner P."/>
            <person name="Garnett J."/>
            <person name="Ghori M.J."/>
            <person name="Gilby L.M."/>
            <person name="Gillson C.J."/>
            <person name="Glithero R.J."/>
            <person name="Grafham D.V."/>
            <person name="Grant M."/>
            <person name="Gribble S."/>
            <person name="Griffiths C."/>
            <person name="Griffiths M.N.D."/>
            <person name="Hall R."/>
            <person name="Halls K.S."/>
            <person name="Hammond S."/>
            <person name="Harley J.L."/>
            <person name="Hart E.A."/>
            <person name="Heath P.D."/>
            <person name="Heathcott R."/>
            <person name="Holmes S.J."/>
            <person name="Howden P.J."/>
            <person name="Howe K.L."/>
            <person name="Howell G.R."/>
            <person name="Huckle E."/>
            <person name="Humphray S.J."/>
            <person name="Humphries M.D."/>
            <person name="Hunt A.R."/>
            <person name="Johnson C.M."/>
            <person name="Joy A.A."/>
            <person name="Kay M."/>
            <person name="Keenan S.J."/>
            <person name="Kimberley A.M."/>
            <person name="King A."/>
            <person name="Laird G.K."/>
            <person name="Langford C."/>
            <person name="Lawlor S."/>
            <person name="Leongamornlert D.A."/>
            <person name="Leversha M."/>
            <person name="Lloyd C.R."/>
            <person name="Lloyd D.M."/>
            <person name="Loveland J.E."/>
            <person name="Lovell J."/>
            <person name="Martin S."/>
            <person name="Mashreghi-Mohammadi M."/>
            <person name="Maslen G.L."/>
            <person name="Matthews L."/>
            <person name="McCann O.T."/>
            <person name="McLaren S.J."/>
            <person name="McLay K."/>
            <person name="McMurray A."/>
            <person name="Moore M.J.F."/>
            <person name="Mullikin J.C."/>
            <person name="Niblett D."/>
            <person name="Nickerson T."/>
            <person name="Novik K.L."/>
            <person name="Oliver K."/>
            <person name="Overton-Larty E.K."/>
            <person name="Parker A."/>
            <person name="Patel R."/>
            <person name="Pearce A.V."/>
            <person name="Peck A.I."/>
            <person name="Phillimore B.J.C.T."/>
            <person name="Phillips S."/>
            <person name="Plumb R.W."/>
            <person name="Porter K.M."/>
            <person name="Ramsey Y."/>
            <person name="Ranby S.A."/>
            <person name="Rice C.M."/>
            <person name="Ross M.T."/>
            <person name="Searle S.M."/>
            <person name="Sehra H.K."/>
            <person name="Sheridan E."/>
            <person name="Skuce C.D."/>
            <person name="Smith S."/>
            <person name="Smith M."/>
            <person name="Spraggon L."/>
            <person name="Squares S.L."/>
            <person name="Steward C.A."/>
            <person name="Sycamore N."/>
            <person name="Tamlyn-Hall G."/>
            <person name="Tester J."/>
            <person name="Theaker A.J."/>
            <person name="Thomas D.W."/>
            <person name="Thorpe A."/>
            <person name="Tracey A."/>
            <person name="Tromans A."/>
            <person name="Tubby B."/>
            <person name="Wall M."/>
            <person name="Wallis J.M."/>
            <person name="West A.P."/>
            <person name="White S.S."/>
            <person name="Whitehead S.L."/>
            <person name="Whittaker H."/>
            <person name="Wild A."/>
            <person name="Willey D.J."/>
            <person name="Wilmer T.E."/>
            <person name="Wood J.M."/>
            <person name="Wray P.W."/>
            <person name="Wyatt J.C."/>
            <person name="Young L."/>
            <person name="Younger R.M."/>
            <person name="Bentley D.R."/>
            <person name="Coulson A."/>
            <person name="Durbin R.M."/>
            <person name="Hubbard T."/>
            <person name="Sulston J.E."/>
            <person name="Dunham I."/>
            <person name="Rogers J."/>
            <person name="Beck S."/>
        </authorList>
    </citation>
    <scope>NUCLEOTIDE SEQUENCE [LARGE SCALE GENOMIC DNA]</scope>
</reference>
<reference key="7">
    <citation type="submission" date="2005-07" db="EMBL/GenBank/DDBJ databases">
        <authorList>
            <person name="Mural R.J."/>
            <person name="Istrail S."/>
            <person name="Sutton G.G."/>
            <person name="Florea L."/>
            <person name="Halpern A.L."/>
            <person name="Mobarry C.M."/>
            <person name="Lippert R."/>
            <person name="Walenz B."/>
            <person name="Shatkay H."/>
            <person name="Dew I."/>
            <person name="Miller J.R."/>
            <person name="Flanigan M.J."/>
            <person name="Edwards N.J."/>
            <person name="Bolanos R."/>
            <person name="Fasulo D."/>
            <person name="Halldorsson B.V."/>
            <person name="Hannenhalli S."/>
            <person name="Turner R."/>
            <person name="Yooseph S."/>
            <person name="Lu F."/>
            <person name="Nusskern D.R."/>
            <person name="Shue B.C."/>
            <person name="Zheng X.H."/>
            <person name="Zhong F."/>
            <person name="Delcher A.L."/>
            <person name="Huson D.H."/>
            <person name="Kravitz S.A."/>
            <person name="Mouchard L."/>
            <person name="Reinert K."/>
            <person name="Remington K.A."/>
            <person name="Clark A.G."/>
            <person name="Waterman M.S."/>
            <person name="Eichler E.E."/>
            <person name="Adams M.D."/>
            <person name="Hunkapiller M.W."/>
            <person name="Myers E.W."/>
            <person name="Venter J.C."/>
        </authorList>
    </citation>
    <scope>NUCLEOTIDE SEQUENCE [LARGE SCALE GENOMIC DNA]</scope>
    <scope>VARIANT PHE-47</scope>
</reference>
<reference key="8">
    <citation type="journal article" date="2004" name="Genome Res.">
        <title>The status, quality, and expansion of the NIH full-length cDNA project: the Mammalian Gene Collection (MGC).</title>
        <authorList>
            <consortium name="The MGC Project Team"/>
        </authorList>
    </citation>
    <scope>NUCLEOTIDE SEQUENCE [LARGE SCALE MRNA]</scope>
    <scope>VARIANT PHE-47</scope>
    <source>
        <tissue>Brain</tissue>
    </source>
</reference>
<reference key="9">
    <citation type="journal article" date="1997" name="Arch. Biochem. Biophys.">
        <title>Catalytic properties of NAD(P)H:quinone oxidoreductase-2 (NQO2), a dihydronicotinamide riboside dependent oxidoreductase.</title>
        <authorList>
            <person name="Wu K."/>
            <person name="Knox R."/>
            <person name="Sun X.Z."/>
            <person name="Joseph P."/>
            <person name="Jaiswal A.K."/>
            <person name="Zhang D."/>
            <person name="Deng P.S.-K."/>
            <person name="Chen S."/>
        </authorList>
    </citation>
    <scope>CHARACTERIZATION</scope>
    <scope>BIOPHYSICOCHEMICAL PROPERTIES</scope>
</reference>
<reference key="10">
    <citation type="journal article" date="1997" name="Proc. Natl. Acad. Sci. U.S.A.">
        <title>Unexpected genetic and structural relationships of a long-forgotten flavoenzyme to NAD(P)H:quinone reductase (DT-diaphorase).</title>
        <authorList>
            <person name="Zhao Q."/>
            <person name="Yang X.L."/>
            <person name="Holtzclaw W.D."/>
            <person name="Talalay P."/>
        </authorList>
    </citation>
    <scope>CHARACTERIZATION</scope>
</reference>
<reference key="11">
    <citation type="journal article" date="1997" name="Proc. Natl. Acad. Sci. U.S.A.">
        <authorList>
            <person name="Zhao Q."/>
            <person name="Yang X.L."/>
            <person name="Holtzclaw W.D."/>
            <person name="Talalay P."/>
        </authorList>
    </citation>
    <scope>ERRATUM OF PUBMED:9050836</scope>
</reference>
<reference key="12">
    <citation type="journal article" date="2004" name="Biochemistry">
        <title>Kinetic mechanism of quinone oxidoreductase 2 and its inhibition by the antimalarial quinolines.</title>
        <authorList>
            <person name="Kwiek J.J."/>
            <person name="Haystead T.A.J."/>
            <person name="Rudolph J."/>
        </authorList>
    </citation>
    <scope>BIOPHYSICOCHEMICAL PROPERTIES</scope>
</reference>
<reference key="13">
    <citation type="journal article" date="2009" name="Mol. Cell. Proteomics">
        <title>Large-scale proteomics analysis of the human kinome.</title>
        <authorList>
            <person name="Oppermann F.S."/>
            <person name="Gnad F."/>
            <person name="Olsen J.V."/>
            <person name="Hornberger R."/>
            <person name="Greff Z."/>
            <person name="Keri G."/>
            <person name="Mann M."/>
            <person name="Daub H."/>
        </authorList>
    </citation>
    <scope>PHOSPHORYLATION [LARGE SCALE ANALYSIS] AT SER-80 AND SER-197</scope>
    <scope>IDENTIFICATION BY MASS SPECTROMETRY [LARGE SCALE ANALYSIS]</scope>
</reference>
<reference key="14">
    <citation type="journal article" date="2011" name="BMC Syst. Biol.">
        <title>Initial characterization of the human central proteome.</title>
        <authorList>
            <person name="Burkard T.R."/>
            <person name="Planyavsky M."/>
            <person name="Kaupe I."/>
            <person name="Breitwieser F.P."/>
            <person name="Buerckstuemmer T."/>
            <person name="Bennett K.L."/>
            <person name="Superti-Furga G."/>
            <person name="Colinge J."/>
        </authorList>
    </citation>
    <scope>IDENTIFICATION BY MASS SPECTROMETRY [LARGE SCALE ANALYSIS]</scope>
</reference>
<reference key="15">
    <citation type="journal article" date="2014" name="J. Proteomics">
        <title>An enzyme assisted RP-RPLC approach for in-depth analysis of human liver phosphoproteome.</title>
        <authorList>
            <person name="Bian Y."/>
            <person name="Song C."/>
            <person name="Cheng K."/>
            <person name="Dong M."/>
            <person name="Wang F."/>
            <person name="Huang J."/>
            <person name="Sun D."/>
            <person name="Wang L."/>
            <person name="Ye M."/>
            <person name="Zou H."/>
        </authorList>
    </citation>
    <scope>IDENTIFICATION BY MASS SPECTROMETRY [LARGE SCALE ANALYSIS]</scope>
    <source>
        <tissue>Liver</tissue>
    </source>
</reference>
<reference key="16">
    <citation type="journal article" date="1999" name="Biochemistry">
        <title>Crystal structure of human quinone reductase type 2, a metalloflavoprotein.</title>
        <authorList>
            <person name="Foster C.E."/>
            <person name="Bianchet M.A."/>
            <person name="Talalay P."/>
            <person name="Zhao Q."/>
            <person name="Amzel L.M."/>
        </authorList>
    </citation>
    <scope>X-RAY CRYSTALLOGRAPHY (2.4 ANGSTROMS)</scope>
</reference>
<reference key="17">
    <citation type="journal article" date="2004" name="Biochemistry">
        <title>Crystal structure of quinone reductase 2 in complex with resveratrol.</title>
        <authorList>
            <person name="Buryanovskyy L."/>
            <person name="Fu Y."/>
            <person name="Boyd M."/>
            <person name="Ma Y."/>
            <person name="Hsieh T.-C."/>
            <person name="Wu J.M."/>
            <person name="Zhang Z."/>
        </authorList>
    </citation>
    <scope>X-RAY CRYSTALLOGRAPHY (1.5 ANGSTROMS) IN COMPLEX WITH RESVERATROL</scope>
</reference>
<reference key="18">
    <citation type="journal article" date="2005" name="Biochem. Biophys. Res. Commun.">
        <title>Crystal structure of quinone reductase 2 in complex with cancer prodrug CB1954.</title>
        <authorList>
            <person name="Fu Y."/>
            <person name="Buryanovskyy L."/>
            <person name="Zhang Z."/>
        </authorList>
    </citation>
    <scope>X-RAY CRYSTALLOGRAPHY (1.5 ANGSTROMS) IN COMPLEX WITH CB1954</scope>
    <scope>MUTAGENESIS OF ASN-162</scope>
</reference>
<reference key="19">
    <citation type="journal article" date="2008" name="Biochem. J.">
        <title>Kinetic, thermodynamic and X-ray structural insights into the interaction of melatonin and analogues with quinone reductase 2.</title>
        <authorList>
            <person name="Calamini B."/>
            <person name="Santarsiero B.D."/>
            <person name="Boutin J.A."/>
            <person name="Mesecar A.D."/>
        </authorList>
    </citation>
    <scope>X-RAY CRYSTALLOGRAPHY (1.6 ANGSTROMS) IN COMPLEX WITH MELATONIN AND FAD</scope>
    <scope>FUNCTION</scope>
    <scope>SUBUNIT</scope>
    <scope>ACTIVITY REGULATION</scope>
</reference>
<reference key="20">
    <citation type="journal article" date="2008" name="J. Biol. Chem.">
        <title>Quinone reductase 2 is a catechol quinone reductase.</title>
        <authorList>
            <person name="Fu Y."/>
            <person name="Buryanovskyy L."/>
            <person name="Zhang Z."/>
        </authorList>
    </citation>
    <scope>X-RAY CRYSTALLOGRAPHY (2.1 ANGSTROMS) IN COMPLEXES WITH DOPAMINE AND ADRENOCHROME</scope>
    <scope>ENZYME ACTIVITY</scope>
</reference>
<reference key="21">
    <citation type="journal article" date="2009" name="BMC Struct. Biol.">
        <title>The structure of the leukemia drug imatinib bound to human quinone reductase 2 (NQO2).</title>
        <authorList>
            <person name="Winger J.A."/>
            <person name="Hantschel O."/>
            <person name="Superti-Furga G."/>
            <person name="Kuriyan J."/>
        </authorList>
    </citation>
    <scope>X-RAY CRYSTALLOGRAPHY (1.75 ANGSTROMS) IN COMPLEX WITH ZINC IONS; FAD AND IMATINIB</scope>
</reference>
<gene>
    <name type="primary">NQO2</name>
    <name type="synonym">NMOR2</name>
</gene>
<accession>P16083</accession>
<accession>B2R492</accession>
<accession>Q5TD04</accession>